<keyword id="KW-0997">Cell inner membrane</keyword>
<keyword id="KW-1003">Cell membrane</keyword>
<keyword id="KW-0444">Lipid biosynthesis</keyword>
<keyword id="KW-0443">Lipid metabolism</keyword>
<keyword id="KW-0472">Membrane</keyword>
<keyword id="KW-0594">Phospholipid biosynthesis</keyword>
<keyword id="KW-1208">Phospholipid metabolism</keyword>
<keyword id="KW-0808">Transferase</keyword>
<keyword id="KW-0812">Transmembrane</keyword>
<keyword id="KW-1133">Transmembrane helix</keyword>
<reference key="1">
    <citation type="journal article" date="2006" name="PLoS Genet.">
        <title>The complete genome sequence and comparative genome analysis of the high pathogenicity Yersinia enterocolitica strain 8081.</title>
        <authorList>
            <person name="Thomson N.R."/>
            <person name="Howard S."/>
            <person name="Wren B.W."/>
            <person name="Holden M.T.G."/>
            <person name="Crossman L."/>
            <person name="Challis G.L."/>
            <person name="Churcher C."/>
            <person name="Mungall K."/>
            <person name="Brooks K."/>
            <person name="Chillingworth T."/>
            <person name="Feltwell T."/>
            <person name="Abdellah Z."/>
            <person name="Hauser H."/>
            <person name="Jagels K."/>
            <person name="Maddison M."/>
            <person name="Moule S."/>
            <person name="Sanders M."/>
            <person name="Whitehead S."/>
            <person name="Quail M.A."/>
            <person name="Dougan G."/>
            <person name="Parkhill J."/>
            <person name="Prentice M.B."/>
        </authorList>
    </citation>
    <scope>NUCLEOTIDE SEQUENCE [LARGE SCALE GENOMIC DNA]</scope>
    <source>
        <strain>NCTC 13174 / 8081</strain>
    </source>
</reference>
<evidence type="ECO:0000255" key="1">
    <source>
        <dbReference type="HAMAP-Rule" id="MF_01437"/>
    </source>
</evidence>
<proteinExistence type="inferred from homology"/>
<protein>
    <recommendedName>
        <fullName evidence="1">CDP-diacylglycerol--glycerol-3-phosphate 3-phosphatidyltransferase</fullName>
        <ecNumber evidence="1">2.7.8.5</ecNumber>
    </recommendedName>
    <alternativeName>
        <fullName evidence="1">Phosphatidylglycerophosphate synthase</fullName>
        <shortName evidence="1">PGP synthase</shortName>
    </alternativeName>
</protein>
<accession>A1JLU9</accession>
<name>PGSA_YERE8</name>
<feature type="chain" id="PRO_0000301865" description="CDP-diacylglycerol--glycerol-3-phosphate 3-phosphatidyltransferase">
    <location>
        <begin position="1"/>
        <end position="182"/>
    </location>
</feature>
<feature type="topological domain" description="Cytoplasmic" evidence="1">
    <location>
        <begin position="1"/>
        <end position="12"/>
    </location>
</feature>
<feature type="transmembrane region" description="Helical" evidence="1">
    <location>
        <begin position="13"/>
        <end position="37"/>
    </location>
</feature>
<feature type="topological domain" description="Periplasmic" evidence="1">
    <location>
        <begin position="38"/>
        <end position="60"/>
    </location>
</feature>
<feature type="transmembrane region" description="Helical" evidence="1">
    <location>
        <begin position="61"/>
        <end position="81"/>
    </location>
</feature>
<feature type="topological domain" description="Cytoplasmic" evidence="1">
    <location>
        <begin position="82"/>
        <end position="86"/>
    </location>
</feature>
<feature type="transmembrane region" description="Helical" evidence="1">
    <location>
        <begin position="87"/>
        <end position="107"/>
    </location>
</feature>
<feature type="topological domain" description="Periplasmic" evidence="1">
    <location>
        <begin position="108"/>
        <end position="145"/>
    </location>
</feature>
<feature type="transmembrane region" description="Helical" evidence="1">
    <location>
        <begin position="146"/>
        <end position="168"/>
    </location>
</feature>
<feature type="topological domain" description="Cytoplasmic" evidence="1">
    <location>
        <begin position="169"/>
        <end position="181"/>
    </location>
</feature>
<comment type="function">
    <text evidence="1">Catalyzes the conversion of cytidine diphosphate diacylglycerol (CDP-DG) and glycerol 3-phosphate into phosphatidylglycerol. Essential for the synthesis of anionic phospholipids, thereby playing a role in balancing the ratio of zwitterionic and anionic phospholipids, which is thought to be important for normal membrane function.</text>
</comment>
<comment type="catalytic activity">
    <reaction evidence="1">
        <text>a CDP-1,2-diacyl-sn-glycerol + sn-glycerol 3-phosphate = a 1,2-diacyl-sn-glycero-3-phospho-(1'-sn-glycero-3'-phosphate) + CMP + H(+)</text>
        <dbReference type="Rhea" id="RHEA:12593"/>
        <dbReference type="ChEBI" id="CHEBI:15378"/>
        <dbReference type="ChEBI" id="CHEBI:57597"/>
        <dbReference type="ChEBI" id="CHEBI:58332"/>
        <dbReference type="ChEBI" id="CHEBI:60110"/>
        <dbReference type="ChEBI" id="CHEBI:60377"/>
        <dbReference type="EC" id="2.7.8.5"/>
    </reaction>
</comment>
<comment type="pathway">
    <text evidence="1">Phospholipid metabolism; phosphatidylglycerol biosynthesis; phosphatidylglycerol from CDP-diacylglycerol: step 1/2.</text>
</comment>
<comment type="subcellular location">
    <subcellularLocation>
        <location evidence="1">Cell inner membrane</location>
        <topology evidence="1">Multi-pass membrane protein</topology>
    </subcellularLocation>
</comment>
<comment type="similarity">
    <text evidence="1">Belongs to the CDP-alcohol phosphatidyltransferase class-I family.</text>
</comment>
<organism>
    <name type="scientific">Yersinia enterocolitica serotype O:8 / biotype 1B (strain NCTC 13174 / 8081)</name>
    <dbReference type="NCBI Taxonomy" id="393305"/>
    <lineage>
        <taxon>Bacteria</taxon>
        <taxon>Pseudomonadati</taxon>
        <taxon>Pseudomonadota</taxon>
        <taxon>Gammaproteobacteria</taxon>
        <taxon>Enterobacterales</taxon>
        <taxon>Yersiniaceae</taxon>
        <taxon>Yersinia</taxon>
    </lineage>
</organism>
<dbReference type="EC" id="2.7.8.5" evidence="1"/>
<dbReference type="EMBL" id="AM286415">
    <property type="protein sequence ID" value="CAL11899.1"/>
    <property type="molecule type" value="Genomic_DNA"/>
</dbReference>
<dbReference type="RefSeq" id="WP_005170287.1">
    <property type="nucleotide sequence ID" value="NC_008800.1"/>
</dbReference>
<dbReference type="RefSeq" id="YP_001006096.1">
    <property type="nucleotide sequence ID" value="NC_008800.1"/>
</dbReference>
<dbReference type="SMR" id="A1JLU9"/>
<dbReference type="KEGG" id="yen:YE1829"/>
<dbReference type="PATRIC" id="fig|393305.7.peg.1981"/>
<dbReference type="eggNOG" id="COG0558">
    <property type="taxonomic scope" value="Bacteria"/>
</dbReference>
<dbReference type="HOGENOM" id="CLU_051314_2_1_6"/>
<dbReference type="OrthoDB" id="9796672at2"/>
<dbReference type="UniPathway" id="UPA00084">
    <property type="reaction ID" value="UER00503"/>
</dbReference>
<dbReference type="Proteomes" id="UP000000642">
    <property type="component" value="Chromosome"/>
</dbReference>
<dbReference type="GO" id="GO:0005886">
    <property type="term" value="C:plasma membrane"/>
    <property type="evidence" value="ECO:0007669"/>
    <property type="project" value="UniProtKB-SubCell"/>
</dbReference>
<dbReference type="GO" id="GO:0008444">
    <property type="term" value="F:CDP-diacylglycerol-glycerol-3-phosphate 3-phosphatidyltransferase activity"/>
    <property type="evidence" value="ECO:0007669"/>
    <property type="project" value="UniProtKB-UniRule"/>
</dbReference>
<dbReference type="GO" id="GO:0006655">
    <property type="term" value="P:phosphatidylglycerol biosynthetic process"/>
    <property type="evidence" value="ECO:0007669"/>
    <property type="project" value="UniProtKB-UniRule"/>
</dbReference>
<dbReference type="FunFam" id="1.20.120.1760:FF:000001">
    <property type="entry name" value="CDP-diacylglycerol--glycerol-3-phosphate 3-phosphatidyltransferase"/>
    <property type="match status" value="1"/>
</dbReference>
<dbReference type="Gene3D" id="1.20.120.1760">
    <property type="match status" value="1"/>
</dbReference>
<dbReference type="HAMAP" id="MF_01437">
    <property type="entry name" value="PgsA"/>
    <property type="match status" value="1"/>
</dbReference>
<dbReference type="InterPro" id="IPR050324">
    <property type="entry name" value="CDP-alcohol_PTase-I"/>
</dbReference>
<dbReference type="InterPro" id="IPR000462">
    <property type="entry name" value="CDP-OH_P_trans"/>
</dbReference>
<dbReference type="InterPro" id="IPR043130">
    <property type="entry name" value="CDP-OH_PTrfase_TM_dom"/>
</dbReference>
<dbReference type="InterPro" id="IPR048254">
    <property type="entry name" value="CDP_ALCOHOL_P_TRANSF_CS"/>
</dbReference>
<dbReference type="InterPro" id="IPR023762">
    <property type="entry name" value="PGP_synthase_bac"/>
</dbReference>
<dbReference type="InterPro" id="IPR004570">
    <property type="entry name" value="Phosphatidylglycerol_P_synth"/>
</dbReference>
<dbReference type="NCBIfam" id="TIGR00560">
    <property type="entry name" value="pgsA"/>
    <property type="match status" value="1"/>
</dbReference>
<dbReference type="NCBIfam" id="NF008090">
    <property type="entry name" value="PRK10832.1"/>
    <property type="match status" value="1"/>
</dbReference>
<dbReference type="PANTHER" id="PTHR14269:SF62">
    <property type="entry name" value="CDP-DIACYLGLYCEROL--GLYCEROL-3-PHOSPHATE 3-PHOSPHATIDYLTRANSFERASE 1, CHLOROPLASTIC"/>
    <property type="match status" value="1"/>
</dbReference>
<dbReference type="PANTHER" id="PTHR14269">
    <property type="entry name" value="CDP-DIACYLGLYCEROL--GLYCEROL-3-PHOSPHATE 3-PHOSPHATIDYLTRANSFERASE-RELATED"/>
    <property type="match status" value="1"/>
</dbReference>
<dbReference type="Pfam" id="PF01066">
    <property type="entry name" value="CDP-OH_P_transf"/>
    <property type="match status" value="1"/>
</dbReference>
<dbReference type="PIRSF" id="PIRSF000847">
    <property type="entry name" value="Phos_ph_gly_syn"/>
    <property type="match status" value="1"/>
</dbReference>
<dbReference type="PROSITE" id="PS00379">
    <property type="entry name" value="CDP_ALCOHOL_P_TRANSF"/>
    <property type="match status" value="1"/>
</dbReference>
<gene>
    <name evidence="1" type="primary">pgsA</name>
    <name type="ordered locus">YE1829</name>
</gene>
<sequence>MQLNIPTWLTLFRVVLIPFFVLAFYLPFVWAPMVCAIIFVFAAATDWFDGFLARRWKQTTRFGAFLDPVADKVMVAIALVLVAEHYHVWWITLPAATMIAREIIISSLREWMAEIGKRSSVAVSWIGKVKTTAQMGSLVGLLWRPDHNIELASFVLLYIAAVLTFWSMFQYLNAAWKDLLEP</sequence>